<gene>
    <name type="ordered locus">Plav_1521</name>
</gene>
<organism>
    <name type="scientific">Parvibaculum lavamentivorans (strain DS-1 / DSM 13023 / NCIMB 13966)</name>
    <dbReference type="NCBI Taxonomy" id="402881"/>
    <lineage>
        <taxon>Bacteria</taxon>
        <taxon>Pseudomonadati</taxon>
        <taxon>Pseudomonadota</taxon>
        <taxon>Alphaproteobacteria</taxon>
        <taxon>Hyphomicrobiales</taxon>
        <taxon>Parvibaculaceae</taxon>
        <taxon>Parvibaculum</taxon>
    </lineage>
</organism>
<comment type="similarity">
    <text evidence="1">Belongs to the UPF0178 family.</text>
</comment>
<feature type="chain" id="PRO_1000072423" description="UPF0178 protein Plav_1521">
    <location>
        <begin position="1"/>
        <end position="152"/>
    </location>
</feature>
<feature type="region of interest" description="Disordered" evidence="2">
    <location>
        <begin position="114"/>
        <end position="152"/>
    </location>
</feature>
<feature type="compositionally biased region" description="Basic and acidic residues" evidence="2">
    <location>
        <begin position="128"/>
        <end position="140"/>
    </location>
</feature>
<protein>
    <recommendedName>
        <fullName evidence="1">UPF0178 protein Plav_1521</fullName>
    </recommendedName>
</protein>
<keyword id="KW-1185">Reference proteome</keyword>
<name>Y1521_PARL1</name>
<reference key="1">
    <citation type="journal article" date="2011" name="Stand. Genomic Sci.">
        <title>Complete genome sequence of Parvibaculum lavamentivorans type strain (DS-1(T)).</title>
        <authorList>
            <person name="Schleheck D."/>
            <person name="Weiss M."/>
            <person name="Pitluck S."/>
            <person name="Bruce D."/>
            <person name="Land M.L."/>
            <person name="Han S."/>
            <person name="Saunders E."/>
            <person name="Tapia R."/>
            <person name="Detter C."/>
            <person name="Brettin T."/>
            <person name="Han J."/>
            <person name="Woyke T."/>
            <person name="Goodwin L."/>
            <person name="Pennacchio L."/>
            <person name="Nolan M."/>
            <person name="Cook A.M."/>
            <person name="Kjelleberg S."/>
            <person name="Thomas T."/>
        </authorList>
    </citation>
    <scope>NUCLEOTIDE SEQUENCE [LARGE SCALE GENOMIC DNA]</scope>
    <source>
        <strain>DS-1 / DSM 13023 / NCIMB 13966</strain>
    </source>
</reference>
<sequence>MTEIYVDADACPVKDEAVKVAERHGLTVHIVSNSGMRPTGHPLVKQVVVPAGPDVADDWIAERAGPQDIVITGDIPLAARALEKGAAALGHDGRPFTQDSIGMALAMRDLMRELRETGQSKGGGPAFSKEDRSRFLRSLEDTVQAIRRRPPP</sequence>
<dbReference type="EMBL" id="CP000774">
    <property type="protein sequence ID" value="ABS63140.1"/>
    <property type="molecule type" value="Genomic_DNA"/>
</dbReference>
<dbReference type="RefSeq" id="WP_012110426.1">
    <property type="nucleotide sequence ID" value="NC_009719.1"/>
</dbReference>
<dbReference type="SMR" id="A7HTA7"/>
<dbReference type="KEGG" id="pla:Plav_1521"/>
<dbReference type="eggNOG" id="COG1671">
    <property type="taxonomic scope" value="Bacteria"/>
</dbReference>
<dbReference type="HOGENOM" id="CLU_106619_2_1_5"/>
<dbReference type="OrthoDB" id="9798918at2"/>
<dbReference type="Proteomes" id="UP000006377">
    <property type="component" value="Chromosome"/>
</dbReference>
<dbReference type="CDD" id="cd18720">
    <property type="entry name" value="PIN_YqxD-like"/>
    <property type="match status" value="1"/>
</dbReference>
<dbReference type="HAMAP" id="MF_00489">
    <property type="entry name" value="UPF0178"/>
    <property type="match status" value="1"/>
</dbReference>
<dbReference type="InterPro" id="IPR003791">
    <property type="entry name" value="UPF0178"/>
</dbReference>
<dbReference type="NCBIfam" id="NF001095">
    <property type="entry name" value="PRK00124.1"/>
    <property type="match status" value="1"/>
</dbReference>
<dbReference type="PANTHER" id="PTHR35146">
    <property type="entry name" value="UPF0178 PROTEIN YAII"/>
    <property type="match status" value="1"/>
</dbReference>
<dbReference type="PANTHER" id="PTHR35146:SF1">
    <property type="entry name" value="UPF0178 PROTEIN YAII"/>
    <property type="match status" value="1"/>
</dbReference>
<dbReference type="Pfam" id="PF02639">
    <property type="entry name" value="DUF188"/>
    <property type="match status" value="1"/>
</dbReference>
<evidence type="ECO:0000255" key="1">
    <source>
        <dbReference type="HAMAP-Rule" id="MF_00489"/>
    </source>
</evidence>
<evidence type="ECO:0000256" key="2">
    <source>
        <dbReference type="SAM" id="MobiDB-lite"/>
    </source>
</evidence>
<accession>A7HTA7</accession>
<proteinExistence type="inferred from homology"/>